<evidence type="ECO:0000255" key="1">
    <source>
        <dbReference type="HAMAP-Rule" id="MF_00048"/>
    </source>
</evidence>
<evidence type="ECO:0000256" key="2">
    <source>
        <dbReference type="SAM" id="MobiDB-lite"/>
    </source>
</evidence>
<organism>
    <name type="scientific">Burkholderia pseudomallei (strain 668)</name>
    <dbReference type="NCBI Taxonomy" id="320373"/>
    <lineage>
        <taxon>Bacteria</taxon>
        <taxon>Pseudomonadati</taxon>
        <taxon>Pseudomonadota</taxon>
        <taxon>Betaproteobacteria</taxon>
        <taxon>Burkholderiales</taxon>
        <taxon>Burkholderiaceae</taxon>
        <taxon>Burkholderia</taxon>
        <taxon>pseudomallei group</taxon>
    </lineage>
</organism>
<protein>
    <recommendedName>
        <fullName evidence="1">UPF0102 protein BURPS668_3819</fullName>
    </recommendedName>
</protein>
<gene>
    <name type="ordered locus">BURPS668_3819</name>
</gene>
<sequence length="144" mass="15617">MCHAREASLGTGEPEAAPRDNFPREAGSKRGIGAAFETRAQRFLERAGLALVARNVTVRGGEIDLVMRERDGTLVFVEVRARANSRYGGAAASIGVRKRMRLLLAAHAFWARTGGANACRFDVVAFEGGRLVWLRDAFRADDAG</sequence>
<reference key="1">
    <citation type="journal article" date="2010" name="Genome Biol. Evol.">
        <title>Continuing evolution of Burkholderia mallei through genome reduction and large-scale rearrangements.</title>
        <authorList>
            <person name="Losada L."/>
            <person name="Ronning C.M."/>
            <person name="DeShazer D."/>
            <person name="Woods D."/>
            <person name="Fedorova N."/>
            <person name="Kim H.S."/>
            <person name="Shabalina S.A."/>
            <person name="Pearson T.R."/>
            <person name="Brinkac L."/>
            <person name="Tan P."/>
            <person name="Nandi T."/>
            <person name="Crabtree J."/>
            <person name="Badger J."/>
            <person name="Beckstrom-Sternberg S."/>
            <person name="Saqib M."/>
            <person name="Schutzer S.E."/>
            <person name="Keim P."/>
            <person name="Nierman W.C."/>
        </authorList>
    </citation>
    <scope>NUCLEOTIDE SEQUENCE [LARGE SCALE GENOMIC DNA]</scope>
    <source>
        <strain>668</strain>
    </source>
</reference>
<dbReference type="EMBL" id="CP000570">
    <property type="protein sequence ID" value="ABN83282.1"/>
    <property type="molecule type" value="Genomic_DNA"/>
</dbReference>
<dbReference type="SMR" id="A3NEP2"/>
<dbReference type="KEGG" id="bpd:BURPS668_3819"/>
<dbReference type="HOGENOM" id="CLU_115353_1_0_4"/>
<dbReference type="GO" id="GO:0003676">
    <property type="term" value="F:nucleic acid binding"/>
    <property type="evidence" value="ECO:0007669"/>
    <property type="project" value="InterPro"/>
</dbReference>
<dbReference type="Gene3D" id="3.40.1350.10">
    <property type="match status" value="1"/>
</dbReference>
<dbReference type="HAMAP" id="MF_00048">
    <property type="entry name" value="UPF0102"/>
    <property type="match status" value="1"/>
</dbReference>
<dbReference type="InterPro" id="IPR011335">
    <property type="entry name" value="Restrct_endonuc-II-like"/>
</dbReference>
<dbReference type="InterPro" id="IPR011856">
    <property type="entry name" value="tRNA_endonuc-like_dom_sf"/>
</dbReference>
<dbReference type="InterPro" id="IPR003509">
    <property type="entry name" value="UPF0102_YraN-like"/>
</dbReference>
<dbReference type="NCBIfam" id="NF009150">
    <property type="entry name" value="PRK12497.1-3"/>
    <property type="match status" value="1"/>
</dbReference>
<dbReference type="NCBIfam" id="TIGR00252">
    <property type="entry name" value="YraN family protein"/>
    <property type="match status" value="1"/>
</dbReference>
<dbReference type="PANTHER" id="PTHR34039">
    <property type="entry name" value="UPF0102 PROTEIN YRAN"/>
    <property type="match status" value="1"/>
</dbReference>
<dbReference type="PANTHER" id="PTHR34039:SF1">
    <property type="entry name" value="UPF0102 PROTEIN YRAN"/>
    <property type="match status" value="1"/>
</dbReference>
<dbReference type="Pfam" id="PF02021">
    <property type="entry name" value="UPF0102"/>
    <property type="match status" value="1"/>
</dbReference>
<dbReference type="SUPFAM" id="SSF52980">
    <property type="entry name" value="Restriction endonuclease-like"/>
    <property type="match status" value="1"/>
</dbReference>
<accession>A3NEP2</accession>
<name>Y3819_BURP6</name>
<proteinExistence type="inferred from homology"/>
<feature type="chain" id="PRO_0000336147" description="UPF0102 protein BURPS668_3819">
    <location>
        <begin position="1"/>
        <end position="144"/>
    </location>
</feature>
<feature type="region of interest" description="Disordered" evidence="2">
    <location>
        <begin position="1"/>
        <end position="28"/>
    </location>
</feature>
<feature type="compositionally biased region" description="Basic and acidic residues" evidence="2">
    <location>
        <begin position="16"/>
        <end position="28"/>
    </location>
</feature>
<comment type="similarity">
    <text evidence="1">Belongs to the UPF0102 family.</text>
</comment>